<comment type="function">
    <text evidence="1">Catalyzes the interconversion of 2-phosphoglycerate and 3-phosphoglycerate.</text>
</comment>
<comment type="catalytic activity">
    <reaction evidence="1">
        <text>(2R)-2-phosphoglycerate = (2R)-3-phosphoglycerate</text>
        <dbReference type="Rhea" id="RHEA:15901"/>
        <dbReference type="ChEBI" id="CHEBI:58272"/>
        <dbReference type="ChEBI" id="CHEBI:58289"/>
        <dbReference type="EC" id="5.4.2.11"/>
    </reaction>
</comment>
<comment type="pathway">
    <text evidence="1">Carbohydrate degradation; glycolysis; pyruvate from D-glyceraldehyde 3-phosphate: step 3/5.</text>
</comment>
<comment type="similarity">
    <text evidence="1">Belongs to the phosphoglycerate mutase family. BPG-dependent PGAM subfamily.</text>
</comment>
<dbReference type="EC" id="5.4.2.11" evidence="1"/>
<dbReference type="EMBL" id="CP000485">
    <property type="protein sequence ID" value="ABK85539.1"/>
    <property type="molecule type" value="Genomic_DNA"/>
</dbReference>
<dbReference type="RefSeq" id="WP_000594157.1">
    <property type="nucleotide sequence ID" value="NC_008600.1"/>
</dbReference>
<dbReference type="SMR" id="A0RE96"/>
<dbReference type="KEGG" id="btl:BALH_2240"/>
<dbReference type="HOGENOM" id="CLU_033323_1_1_9"/>
<dbReference type="UniPathway" id="UPA00109">
    <property type="reaction ID" value="UER00186"/>
</dbReference>
<dbReference type="GO" id="GO:0004619">
    <property type="term" value="F:phosphoglycerate mutase activity"/>
    <property type="evidence" value="ECO:0007669"/>
    <property type="project" value="UniProtKB-EC"/>
</dbReference>
<dbReference type="GO" id="GO:0006094">
    <property type="term" value="P:gluconeogenesis"/>
    <property type="evidence" value="ECO:0007669"/>
    <property type="project" value="UniProtKB-UniRule"/>
</dbReference>
<dbReference type="GO" id="GO:0006096">
    <property type="term" value="P:glycolytic process"/>
    <property type="evidence" value="ECO:0007669"/>
    <property type="project" value="UniProtKB-UniRule"/>
</dbReference>
<dbReference type="CDD" id="cd07067">
    <property type="entry name" value="HP_PGM_like"/>
    <property type="match status" value="1"/>
</dbReference>
<dbReference type="FunFam" id="3.40.50.1240:FF:000003">
    <property type="entry name" value="2,3-bisphosphoglycerate-dependent phosphoglycerate mutase"/>
    <property type="match status" value="1"/>
</dbReference>
<dbReference type="Gene3D" id="3.40.50.1240">
    <property type="entry name" value="Phosphoglycerate mutase-like"/>
    <property type="match status" value="1"/>
</dbReference>
<dbReference type="HAMAP" id="MF_01039">
    <property type="entry name" value="PGAM_GpmA"/>
    <property type="match status" value="1"/>
</dbReference>
<dbReference type="InterPro" id="IPR013078">
    <property type="entry name" value="His_Pase_superF_clade-1"/>
</dbReference>
<dbReference type="InterPro" id="IPR029033">
    <property type="entry name" value="His_PPase_superfam"/>
</dbReference>
<dbReference type="InterPro" id="IPR001345">
    <property type="entry name" value="PG/BPGM_mutase_AS"/>
</dbReference>
<dbReference type="InterPro" id="IPR005952">
    <property type="entry name" value="Phosphogly_mut1"/>
</dbReference>
<dbReference type="NCBIfam" id="TIGR01258">
    <property type="entry name" value="pgm_1"/>
    <property type="match status" value="1"/>
</dbReference>
<dbReference type="NCBIfam" id="NF010713">
    <property type="entry name" value="PRK14115.1"/>
    <property type="match status" value="1"/>
</dbReference>
<dbReference type="PANTHER" id="PTHR11931">
    <property type="entry name" value="PHOSPHOGLYCERATE MUTASE"/>
    <property type="match status" value="1"/>
</dbReference>
<dbReference type="Pfam" id="PF00300">
    <property type="entry name" value="His_Phos_1"/>
    <property type="match status" value="1"/>
</dbReference>
<dbReference type="PIRSF" id="PIRSF000709">
    <property type="entry name" value="6PFK_2-Ptase"/>
    <property type="match status" value="1"/>
</dbReference>
<dbReference type="SMART" id="SM00855">
    <property type="entry name" value="PGAM"/>
    <property type="match status" value="1"/>
</dbReference>
<dbReference type="SUPFAM" id="SSF53254">
    <property type="entry name" value="Phosphoglycerate mutase-like"/>
    <property type="match status" value="1"/>
</dbReference>
<dbReference type="PROSITE" id="PS00175">
    <property type="entry name" value="PG_MUTASE"/>
    <property type="match status" value="1"/>
</dbReference>
<reference key="1">
    <citation type="journal article" date="2007" name="J. Bacteriol.">
        <title>The complete genome sequence of Bacillus thuringiensis Al Hakam.</title>
        <authorList>
            <person name="Challacombe J.F."/>
            <person name="Altherr M.R."/>
            <person name="Xie G."/>
            <person name="Bhotika S.S."/>
            <person name="Brown N."/>
            <person name="Bruce D."/>
            <person name="Campbell C.S."/>
            <person name="Campbell M.L."/>
            <person name="Chen J."/>
            <person name="Chertkov O."/>
            <person name="Cleland C."/>
            <person name="Dimitrijevic M."/>
            <person name="Doggett N.A."/>
            <person name="Fawcett J.J."/>
            <person name="Glavina T."/>
            <person name="Goodwin L.A."/>
            <person name="Green L.D."/>
            <person name="Han C.S."/>
            <person name="Hill K.K."/>
            <person name="Hitchcock P."/>
            <person name="Jackson P.J."/>
            <person name="Keim P."/>
            <person name="Kewalramani A.R."/>
            <person name="Longmire J."/>
            <person name="Lucas S."/>
            <person name="Malfatti S."/>
            <person name="Martinez D."/>
            <person name="McMurry K."/>
            <person name="Meincke L.J."/>
            <person name="Misra M."/>
            <person name="Moseman B.L."/>
            <person name="Mundt M."/>
            <person name="Munk A.C."/>
            <person name="Okinaka R.T."/>
            <person name="Parson-Quintana B."/>
            <person name="Reilly L.P."/>
            <person name="Richardson P."/>
            <person name="Robinson D.L."/>
            <person name="Saunders E."/>
            <person name="Tapia R."/>
            <person name="Tesmer J.G."/>
            <person name="Thayer N."/>
            <person name="Thompson L.S."/>
            <person name="Tice H."/>
            <person name="Ticknor L.O."/>
            <person name="Wills P.L."/>
            <person name="Gilna P."/>
            <person name="Brettin T.S."/>
        </authorList>
    </citation>
    <scope>NUCLEOTIDE SEQUENCE [LARGE SCALE GENOMIC DNA]</scope>
    <source>
        <strain>Al Hakam</strain>
    </source>
</reference>
<feature type="chain" id="PRO_1000064029" description="2,3-bisphosphoglycerate-dependent phosphoglycerate mutase">
    <location>
        <begin position="1"/>
        <end position="245"/>
    </location>
</feature>
<feature type="active site" description="Tele-phosphohistidine intermediate" evidence="1">
    <location>
        <position position="9"/>
    </location>
</feature>
<feature type="active site" description="Proton donor/acceptor" evidence="1">
    <location>
        <position position="87"/>
    </location>
</feature>
<feature type="binding site" evidence="1">
    <location>
        <begin position="8"/>
        <end position="15"/>
    </location>
    <ligand>
        <name>substrate</name>
    </ligand>
</feature>
<feature type="binding site" evidence="1">
    <location>
        <begin position="21"/>
        <end position="22"/>
    </location>
    <ligand>
        <name>substrate</name>
    </ligand>
</feature>
<feature type="binding site" evidence="1">
    <location>
        <position position="60"/>
    </location>
    <ligand>
        <name>substrate</name>
    </ligand>
</feature>
<feature type="binding site" evidence="1">
    <location>
        <begin position="87"/>
        <end position="90"/>
    </location>
    <ligand>
        <name>substrate</name>
    </ligand>
</feature>
<feature type="binding site" evidence="1">
    <location>
        <position position="98"/>
    </location>
    <ligand>
        <name>substrate</name>
    </ligand>
</feature>
<feature type="binding site" evidence="1">
    <location>
        <begin position="114"/>
        <end position="115"/>
    </location>
    <ligand>
        <name>substrate</name>
    </ligand>
</feature>
<feature type="binding site" evidence="1">
    <location>
        <begin position="183"/>
        <end position="184"/>
    </location>
    <ligand>
        <name>substrate</name>
    </ligand>
</feature>
<feature type="site" description="Transition state stabilizer" evidence="1">
    <location>
        <position position="182"/>
    </location>
</feature>
<protein>
    <recommendedName>
        <fullName evidence="1">2,3-bisphosphoglycerate-dependent phosphoglycerate mutase</fullName>
        <shortName evidence="1">BPG-dependent PGAM</shortName>
        <shortName evidence="1">PGAM</shortName>
        <shortName evidence="1">Phosphoglyceromutase</shortName>
        <shortName evidence="1">dPGM</shortName>
        <ecNumber evidence="1">5.4.2.11</ecNumber>
    </recommendedName>
</protein>
<organism>
    <name type="scientific">Bacillus thuringiensis (strain Al Hakam)</name>
    <dbReference type="NCBI Taxonomy" id="412694"/>
    <lineage>
        <taxon>Bacteria</taxon>
        <taxon>Bacillati</taxon>
        <taxon>Bacillota</taxon>
        <taxon>Bacilli</taxon>
        <taxon>Bacillales</taxon>
        <taxon>Bacillaceae</taxon>
        <taxon>Bacillus</taxon>
        <taxon>Bacillus cereus group</taxon>
    </lineage>
</organism>
<accession>A0RE96</accession>
<sequence length="245" mass="28361">MIKLVLIRHGQSLWNLENRFTGWTDVDLSENGLSEAREAGAILKKNGYTFDVAYTSVLKRAIRTLWIVLHEMNLSWVPVHKSWKLNERHYGALQGLNKDETAKKYGEEQVHIWRRSIDVRPPALTEDDPRYEMNDPRYKELKKGEFPLTECLVDTEKRVLNYWHSEIAPSLKSGEKVIISSHGNTIRSLVKYLDNLSSDGVVSLNIPTSIPLVYELDDDLRPIRHYYLSMDGEVPEGEFPKHIVF</sequence>
<evidence type="ECO:0000255" key="1">
    <source>
        <dbReference type="HAMAP-Rule" id="MF_01039"/>
    </source>
</evidence>
<keyword id="KW-0312">Gluconeogenesis</keyword>
<keyword id="KW-0324">Glycolysis</keyword>
<keyword id="KW-0413">Isomerase</keyword>
<proteinExistence type="inferred from homology"/>
<gene>
    <name evidence="1" type="primary">gpmA</name>
    <name type="ordered locus">BALH_2240</name>
</gene>
<name>GPMA_BACAH</name>